<proteinExistence type="evidence at protein level"/>
<reference key="1">
    <citation type="journal article" date="1961" name="Nature">
        <title>Amino-acid sequence of horse heart cytochrome c.</title>
        <authorList>
            <person name="Margoliash E."/>
            <person name="Smith E.L."/>
            <person name="Kreil G."/>
            <person name="Tuppy H."/>
        </authorList>
    </citation>
    <scope>PROTEIN SEQUENCE OF 2-105</scope>
    <scope>ACETYLATION AT GLY-2</scope>
    <source>
        <tissue>Heart</tissue>
    </source>
</reference>
<reference key="2">
    <citation type="journal article" date="1971" name="J. Biol. Chem.">
        <title>Ferricytochrome c. I. General features of the horse and bonito proteins at 2.8-A resolution.</title>
        <authorList>
            <person name="Dickerson R.E."/>
            <person name="Takano T."/>
            <person name="Eisenberg D."/>
            <person name="Kallai O.B."/>
            <person name="Samson L."/>
            <person name="Cooper A."/>
            <person name="Margoliash E."/>
        </authorList>
    </citation>
    <scope>X-RAY CRYSTALLOGRAPHY (2.8 ANGSTROMS)</scope>
</reference>
<reference key="3">
    <citation type="journal article" date="1990" name="J. Mol. Biol.">
        <title>High-resolution three-dimensional structure of horse heart cytochrome c.</title>
        <authorList>
            <person name="Bushnell G.W."/>
            <person name="Louie G.V."/>
            <person name="Brayer G.D."/>
        </authorList>
    </citation>
    <scope>X-RAY CRYSTALLOGRAPHY (1.9 ANGSTROMS)</scope>
</reference>
<reference key="4">
    <citation type="journal article" date="1995" name="Structure">
        <title>The low ionic strength crystal structure of horse cytochrome c at 2.1-A resolution and comparison with its high ionic strength counterpart.</title>
        <authorList>
            <person name="Sanishvili R."/>
            <person name="Volz K.W."/>
            <person name="Westbrook E.M."/>
            <person name="Margoliash E."/>
        </authorList>
    </citation>
    <scope>X-RAY CRYSTALLOGRAPHY (2.1 ANGSTROMS)</scope>
</reference>
<reference key="5">
    <citation type="journal article" date="1989" name="Biochemistry">
        <title>Proton resonance assignments of horse ferricytochrome c.</title>
        <authorList>
            <person name="Feng Y."/>
            <person name="Roder H."/>
            <person name="Englander S.W."/>
            <person name="Wand A.J."/>
            <person name="di Stefano D.L."/>
        </authorList>
    </citation>
    <scope>STRUCTURE BY NMR</scope>
</reference>
<reference key="6">
    <citation type="journal article" date="1996" name="Biochemistry">
        <title>Solution structure of horse heart ferricytochrome c and detection of redox-related structural changes by high-resolution 1H NMR.</title>
        <authorList>
            <person name="Qi P.X."/>
            <person name="Beckman R.A."/>
            <person name="Wand A.J."/>
        </authorList>
    </citation>
    <scope>STRUCTURE BY NMR</scope>
</reference>
<reference key="7">
    <citation type="journal article" date="1997" name="Biochemistry">
        <title>Solution structure of oxidized horse heart cytochrome c.</title>
        <authorList>
            <person name="Banci L."/>
            <person name="Bertini I."/>
            <person name="Gray H.B."/>
            <person name="Luchinat C."/>
            <person name="Reddig T."/>
            <person name="Rosato A."/>
            <person name="Turano P."/>
        </authorList>
    </citation>
    <scope>STRUCTURE BY NMR</scope>
    <source>
        <tissue>Heart</tissue>
    </source>
</reference>
<accession>P00004</accession>
<keyword id="KW-0002">3D-structure</keyword>
<keyword id="KW-0007">Acetylation</keyword>
<keyword id="KW-0053">Apoptosis</keyword>
<keyword id="KW-0903">Direct protein sequencing</keyword>
<keyword id="KW-0249">Electron transport</keyword>
<keyword id="KW-0349">Heme</keyword>
<keyword id="KW-0408">Iron</keyword>
<keyword id="KW-0479">Metal-binding</keyword>
<keyword id="KW-0496">Mitochondrion</keyword>
<keyword id="KW-0597">Phosphoprotein</keyword>
<keyword id="KW-1185">Reference proteome</keyword>
<keyword id="KW-0679">Respiratory chain</keyword>
<keyword id="KW-0813">Transport</keyword>
<sequence length="105" mass="11833">MGDVEKGKKIFVQKCAQCHTVEKGGKHKTGPNLHGLFGRKTGQAPGFTYTDANKNKGITWKEETLMEYLENPKKYIPGTKMIFAGIKKKTEREDLIAYLKKATNE</sequence>
<dbReference type="PIR" id="A00005">
    <property type="entry name" value="CCHO"/>
</dbReference>
<dbReference type="RefSeq" id="XP_005609231.2">
    <property type="nucleotide sequence ID" value="XM_005609174.4"/>
</dbReference>
<dbReference type="PDB" id="1AKK">
    <property type="method" value="NMR"/>
    <property type="chains" value="A=2-105"/>
</dbReference>
<dbReference type="PDB" id="1CRC">
    <property type="method" value="X-ray"/>
    <property type="resolution" value="2.08 A"/>
    <property type="chains" value="A/B=2-105"/>
</dbReference>
<dbReference type="PDB" id="1FI7">
    <property type="method" value="NMR"/>
    <property type="chains" value="A=2-105"/>
</dbReference>
<dbReference type="PDB" id="1FI9">
    <property type="method" value="NMR"/>
    <property type="chains" value="A=2-105"/>
</dbReference>
<dbReference type="PDB" id="1GIW">
    <property type="method" value="NMR"/>
    <property type="chains" value="A=2-105"/>
</dbReference>
<dbReference type="PDB" id="1HRC">
    <property type="method" value="X-ray"/>
    <property type="resolution" value="1.90 A"/>
    <property type="chains" value="A=2-105"/>
</dbReference>
<dbReference type="PDB" id="1I5T">
    <property type="method" value="NMR"/>
    <property type="chains" value="A=2-105"/>
</dbReference>
<dbReference type="PDB" id="1LC1">
    <property type="method" value="NMR"/>
    <property type="chains" value="A=2-105"/>
</dbReference>
<dbReference type="PDB" id="1LC2">
    <property type="method" value="NMR"/>
    <property type="chains" value="A=2-105"/>
</dbReference>
<dbReference type="PDB" id="1M60">
    <property type="method" value="NMR"/>
    <property type="chains" value="A=2-105"/>
</dbReference>
<dbReference type="PDB" id="1OCD">
    <property type="method" value="NMR"/>
    <property type="chains" value="A=2-105"/>
</dbReference>
<dbReference type="PDB" id="1U75">
    <property type="method" value="X-ray"/>
    <property type="resolution" value="2.55 A"/>
    <property type="chains" value="B=2-105"/>
</dbReference>
<dbReference type="PDB" id="1WEJ">
    <property type="method" value="X-ray"/>
    <property type="resolution" value="1.80 A"/>
    <property type="chains" value="F=2-105"/>
</dbReference>
<dbReference type="PDB" id="2FRC">
    <property type="method" value="NMR"/>
    <property type="chains" value="A=2-105"/>
</dbReference>
<dbReference type="PDB" id="2GIW">
    <property type="method" value="NMR"/>
    <property type="chains" value="A=2-105"/>
</dbReference>
<dbReference type="PDB" id="2N3B">
    <property type="method" value="NMR"/>
    <property type="chains" value="A=2-105"/>
</dbReference>
<dbReference type="PDB" id="2PCB">
    <property type="method" value="X-ray"/>
    <property type="resolution" value="2.80 A"/>
    <property type="chains" value="B=2-105"/>
</dbReference>
<dbReference type="PDB" id="3JBT">
    <property type="method" value="EM"/>
    <property type="resolution" value="3.80 A"/>
    <property type="chains" value="B/D/F/H/J/L/N=1-105"/>
</dbReference>
<dbReference type="PDB" id="3NBS">
    <property type="method" value="X-ray"/>
    <property type="resolution" value="2.20 A"/>
    <property type="chains" value="A/B/C/D=2-105"/>
</dbReference>
<dbReference type="PDB" id="3NBT">
    <property type="method" value="X-ray"/>
    <property type="resolution" value="2.10 A"/>
    <property type="chains" value="A/B/C/D/E/F=2-105"/>
</dbReference>
<dbReference type="PDB" id="3O1Y">
    <property type="method" value="X-ray"/>
    <property type="resolution" value="1.75 A"/>
    <property type="chains" value="A/B/C=2-105"/>
</dbReference>
<dbReference type="PDB" id="3O20">
    <property type="method" value="X-ray"/>
    <property type="resolution" value="1.90 A"/>
    <property type="chains" value="A/B/C=2-105"/>
</dbReference>
<dbReference type="PDB" id="3WC8">
    <property type="method" value="X-ray"/>
    <property type="resolution" value="1.80 A"/>
    <property type="chains" value="A=2-105"/>
</dbReference>
<dbReference type="PDB" id="3WUI">
    <property type="method" value="X-ray"/>
    <property type="resolution" value="1.80 A"/>
    <property type="chains" value="A=2-105"/>
</dbReference>
<dbReference type="PDB" id="4NFG">
    <property type="method" value="X-ray"/>
    <property type="resolution" value="2.11 A"/>
    <property type="chains" value="B=2-105"/>
</dbReference>
<dbReference type="PDB" id="4RSZ">
    <property type="method" value="X-ray"/>
    <property type="resolution" value="2.19 A"/>
    <property type="chains" value="A/B/C/D/E/F=2-105"/>
</dbReference>
<dbReference type="PDB" id="5IY5">
    <property type="method" value="X-ray"/>
    <property type="resolution" value="2.00 A"/>
    <property type="chains" value="1/2=2-105"/>
</dbReference>
<dbReference type="PDB" id="5WVE">
    <property type="method" value="EM"/>
    <property type="resolution" value="4.40 A"/>
    <property type="chains" value="B/D/F/H/J/L/N=1-105"/>
</dbReference>
<dbReference type="PDB" id="5ZKV">
    <property type="method" value="NMR"/>
    <property type="chains" value="A=2-105"/>
</dbReference>
<dbReference type="PDB" id="6K9I">
    <property type="method" value="X-ray"/>
    <property type="resolution" value="1.80 A"/>
    <property type="chains" value="A=2-105"/>
</dbReference>
<dbReference type="PDB" id="6K9J">
    <property type="method" value="X-ray"/>
    <property type="resolution" value="0.98 A"/>
    <property type="chains" value="A=2-105"/>
</dbReference>
<dbReference type="PDB" id="6SUV">
    <property type="method" value="X-ray"/>
    <property type="resolution" value="2.50 A"/>
    <property type="chains" value="AaA/BaB/CaC/DaD/EaE/FaF/GaG/HaH=2-105"/>
</dbReference>
<dbReference type="PDB" id="8ZXR">
    <property type="method" value="X-ray"/>
    <property type="resolution" value="1.60 A"/>
    <property type="chains" value="B=12-22"/>
</dbReference>
<dbReference type="PDBsum" id="1AKK"/>
<dbReference type="PDBsum" id="1CRC"/>
<dbReference type="PDBsum" id="1FI7"/>
<dbReference type="PDBsum" id="1FI9"/>
<dbReference type="PDBsum" id="1GIW"/>
<dbReference type="PDBsum" id="1HRC"/>
<dbReference type="PDBsum" id="1I5T"/>
<dbReference type="PDBsum" id="1LC1"/>
<dbReference type="PDBsum" id="1LC2"/>
<dbReference type="PDBsum" id="1M60"/>
<dbReference type="PDBsum" id="1OCD"/>
<dbReference type="PDBsum" id="1U75"/>
<dbReference type="PDBsum" id="1WEJ"/>
<dbReference type="PDBsum" id="2FRC"/>
<dbReference type="PDBsum" id="2GIW"/>
<dbReference type="PDBsum" id="2N3B"/>
<dbReference type="PDBsum" id="2PCB"/>
<dbReference type="PDBsum" id="3JBT"/>
<dbReference type="PDBsum" id="3NBS"/>
<dbReference type="PDBsum" id="3NBT"/>
<dbReference type="PDBsum" id="3O1Y"/>
<dbReference type="PDBsum" id="3O20"/>
<dbReference type="PDBsum" id="3WC8"/>
<dbReference type="PDBsum" id="3WUI"/>
<dbReference type="PDBsum" id="4NFG"/>
<dbReference type="PDBsum" id="4RSZ"/>
<dbReference type="PDBsum" id="5IY5"/>
<dbReference type="PDBsum" id="5WVE"/>
<dbReference type="PDBsum" id="5ZKV"/>
<dbReference type="PDBsum" id="6K9I"/>
<dbReference type="PDBsum" id="6K9J"/>
<dbReference type="PDBsum" id="6SUV"/>
<dbReference type="PDBsum" id="8ZXR"/>
<dbReference type="BMRB" id="P00004"/>
<dbReference type="EMDB" id="EMD-6480"/>
<dbReference type="EMDB" id="EMD-6481"/>
<dbReference type="EMDB" id="EMD-6690"/>
<dbReference type="PCDDB" id="P00004"/>
<dbReference type="SASBDB" id="P00004"/>
<dbReference type="SMR" id="P00004"/>
<dbReference type="DIP" id="DIP-36774N"/>
<dbReference type="FunCoup" id="P00004">
    <property type="interactions" value="1873"/>
</dbReference>
<dbReference type="IntAct" id="P00004">
    <property type="interactions" value="2"/>
</dbReference>
<dbReference type="STRING" id="9796.ENSECAP00000012031"/>
<dbReference type="MoonProt" id="P00004"/>
<dbReference type="CarbonylDB" id="P00004"/>
<dbReference type="iPTMnet" id="P00004"/>
<dbReference type="MetOSite" id="P00004"/>
<dbReference type="PaxDb" id="9796-ENSECAP00000012031"/>
<dbReference type="PeptideAtlas" id="P00004"/>
<dbReference type="ABCD" id="P00004">
    <property type="antibodies" value="7 sequenced antibodies"/>
</dbReference>
<dbReference type="GeneID" id="100053958"/>
<dbReference type="InParanoid" id="P00004"/>
<dbReference type="SABIO-RK" id="P00004"/>
<dbReference type="EvolutionaryTrace" id="P00004"/>
<dbReference type="Proteomes" id="UP000002281">
    <property type="component" value="Unplaced"/>
</dbReference>
<dbReference type="GO" id="GO:0070069">
    <property type="term" value="C:cytochrome complex"/>
    <property type="evidence" value="ECO:0000314"/>
    <property type="project" value="CAFA"/>
</dbReference>
<dbReference type="GO" id="GO:0005829">
    <property type="term" value="C:cytosol"/>
    <property type="evidence" value="ECO:0000250"/>
    <property type="project" value="UniProtKB"/>
</dbReference>
<dbReference type="GO" id="GO:0005758">
    <property type="term" value="C:mitochondrial intermembrane space"/>
    <property type="evidence" value="ECO:0000318"/>
    <property type="project" value="GO_Central"/>
</dbReference>
<dbReference type="GO" id="GO:0009055">
    <property type="term" value="F:electron transfer activity"/>
    <property type="evidence" value="ECO:0000318"/>
    <property type="project" value="GO_Central"/>
</dbReference>
<dbReference type="GO" id="GO:0020037">
    <property type="term" value="F:heme binding"/>
    <property type="evidence" value="ECO:0000314"/>
    <property type="project" value="CAFA"/>
</dbReference>
<dbReference type="GO" id="GO:0042802">
    <property type="term" value="F:identical protein binding"/>
    <property type="evidence" value="ECO:0000353"/>
    <property type="project" value="IntAct"/>
</dbReference>
<dbReference type="GO" id="GO:0008289">
    <property type="term" value="F:lipid binding"/>
    <property type="evidence" value="ECO:0000314"/>
    <property type="project" value="DisProt"/>
</dbReference>
<dbReference type="GO" id="GO:0046872">
    <property type="term" value="F:metal ion binding"/>
    <property type="evidence" value="ECO:0007669"/>
    <property type="project" value="UniProtKB-KW"/>
</dbReference>
<dbReference type="GO" id="GO:0097190">
    <property type="term" value="P:apoptotic signaling pathway"/>
    <property type="evidence" value="ECO:0000314"/>
    <property type="project" value="ARUK-UCL"/>
</dbReference>
<dbReference type="GO" id="GO:0018063">
    <property type="term" value="P:cytochrome c-heme linkage"/>
    <property type="evidence" value="ECO:0000314"/>
    <property type="project" value="CAFA"/>
</dbReference>
<dbReference type="GO" id="GO:0006123">
    <property type="term" value="P:mitochondrial electron transport, cytochrome c to oxygen"/>
    <property type="evidence" value="ECO:0000318"/>
    <property type="project" value="GO_Central"/>
</dbReference>
<dbReference type="GO" id="GO:0006122">
    <property type="term" value="P:mitochondrial electron transport, ubiquinol to cytochrome c"/>
    <property type="evidence" value="ECO:0000318"/>
    <property type="project" value="GO_Central"/>
</dbReference>
<dbReference type="FunFam" id="1.10.760.10:FF:000008">
    <property type="entry name" value="Cytochrome c"/>
    <property type="match status" value="1"/>
</dbReference>
<dbReference type="Gene3D" id="1.10.760.10">
    <property type="entry name" value="Cytochrome c-like domain"/>
    <property type="match status" value="1"/>
</dbReference>
<dbReference type="InterPro" id="IPR009056">
    <property type="entry name" value="Cyt_c-like_dom"/>
</dbReference>
<dbReference type="InterPro" id="IPR036909">
    <property type="entry name" value="Cyt_c-like_dom_sf"/>
</dbReference>
<dbReference type="InterPro" id="IPR002327">
    <property type="entry name" value="Cyt_c_1A/1B"/>
</dbReference>
<dbReference type="PANTHER" id="PTHR11961">
    <property type="entry name" value="CYTOCHROME C"/>
    <property type="match status" value="1"/>
</dbReference>
<dbReference type="Pfam" id="PF00034">
    <property type="entry name" value="Cytochrom_C"/>
    <property type="match status" value="1"/>
</dbReference>
<dbReference type="PRINTS" id="PR00604">
    <property type="entry name" value="CYTCHRMECIAB"/>
</dbReference>
<dbReference type="SUPFAM" id="SSF46626">
    <property type="entry name" value="Cytochrome c"/>
    <property type="match status" value="1"/>
</dbReference>
<dbReference type="PROSITE" id="PS51007">
    <property type="entry name" value="CYTC"/>
    <property type="match status" value="1"/>
</dbReference>
<protein>
    <recommendedName>
        <fullName>Cytochrome c</fullName>
    </recommendedName>
</protein>
<gene>
    <name type="primary">CYCS</name>
    <name type="synonym">CYC</name>
</gene>
<name>CYC_HORSE</name>
<comment type="function">
    <text>Electron carrier protein. The oxidized form of the cytochrome c heme group can accept an electron from the heme group of the cytochrome c1 subunit of cytochrome reductase. Cytochrome c then transfers this electron to the cytochrome oxidase complex, the final protein carrier in the mitochondrial electron-transport chain.</text>
</comment>
<comment type="function">
    <text evidence="1">Plays a role in apoptosis. Suppression of the anti-apoptotic members or activation of the pro-apoptotic members of the Bcl-2 family leads to altered mitochondrial membrane permeability resulting in release of cytochrome c into the cytosol. Binding of cytochrome c to Apaf-1 triggers the activation of caspase-9, which then accelerates apoptosis by activating other caspases (By similarity).</text>
</comment>
<comment type="interaction">
    <interactant intactId="EBI-865260">
        <id>P00004</id>
    </interactant>
    <interactant intactId="EBI-865260">
        <id>P00004</id>
        <label>CYCS</label>
    </interactant>
    <organismsDiffer>false</organismsDiffer>
    <experiments>3</experiments>
</comment>
<comment type="subcellular location">
    <subcellularLocation>
        <location>Mitochondrion intermembrane space</location>
    </subcellularLocation>
    <text>Loosely associated with the inner membrane.</text>
</comment>
<comment type="PTM">
    <text>Binds 1 heme c group covalently per subunit.</text>
</comment>
<comment type="PTM">
    <text evidence="1">Phosphorylation at Tyr-49 and Tyr-98 both reduce by half the turnover in the reaction with cytochrome c oxidase, down-regulating mitochondrial respiration.</text>
</comment>
<comment type="miscellaneous">
    <text>Mules and hinnies are heterozygous, having equal amount of horse and donkey cytochromes c.</text>
</comment>
<comment type="similarity">
    <text evidence="7">Belongs to the cytochrome c family.</text>
</comment>
<comment type="online information" name="Protein Spotlight">
    <link uri="https://www.proteinspotlight.org/back_issues/076"/>
    <text>Life shuttle - Issue 76 of November 2006</text>
</comment>
<organism>
    <name type="scientific">Equus caballus</name>
    <name type="common">Horse</name>
    <dbReference type="NCBI Taxonomy" id="9796"/>
    <lineage>
        <taxon>Eukaryota</taxon>
        <taxon>Metazoa</taxon>
        <taxon>Chordata</taxon>
        <taxon>Craniata</taxon>
        <taxon>Vertebrata</taxon>
        <taxon>Euteleostomi</taxon>
        <taxon>Mammalia</taxon>
        <taxon>Eutheria</taxon>
        <taxon>Laurasiatheria</taxon>
        <taxon>Perissodactyla</taxon>
        <taxon>Equidae</taxon>
        <taxon>Equus</taxon>
    </lineage>
</organism>
<evidence type="ECO:0000250" key="1"/>
<evidence type="ECO:0000250" key="2">
    <source>
        <dbReference type="UniProtKB" id="P62894"/>
    </source>
</evidence>
<evidence type="ECO:0000250" key="3">
    <source>
        <dbReference type="UniProtKB" id="P62897"/>
    </source>
</evidence>
<evidence type="ECO:0000255" key="4">
    <source>
        <dbReference type="PROSITE-ProRule" id="PRU00433"/>
    </source>
</evidence>
<evidence type="ECO:0000269" key="5">
    <source>
    </source>
</evidence>
<evidence type="ECO:0000269" key="6">
    <source>
    </source>
</evidence>
<evidence type="ECO:0000305" key="7"/>
<evidence type="ECO:0007829" key="8">
    <source>
        <dbReference type="PDB" id="1FI7"/>
    </source>
</evidence>
<evidence type="ECO:0007829" key="9">
    <source>
        <dbReference type="PDB" id="1I5T"/>
    </source>
</evidence>
<evidence type="ECO:0007829" key="10">
    <source>
        <dbReference type="PDB" id="1OCD"/>
    </source>
</evidence>
<evidence type="ECO:0007829" key="11">
    <source>
        <dbReference type="PDB" id="1U75"/>
    </source>
</evidence>
<evidence type="ECO:0007829" key="12">
    <source>
        <dbReference type="PDB" id="2PCB"/>
    </source>
</evidence>
<evidence type="ECO:0007829" key="13">
    <source>
        <dbReference type="PDB" id="5IY5"/>
    </source>
</evidence>
<evidence type="ECO:0007829" key="14">
    <source>
        <dbReference type="PDB" id="6K9J"/>
    </source>
</evidence>
<feature type="initiator methionine" description="Removed" evidence="5">
    <location>
        <position position="1"/>
    </location>
</feature>
<feature type="chain" id="PRO_0000108217" description="Cytochrome c">
    <location>
        <begin position="2"/>
        <end position="105"/>
    </location>
</feature>
<feature type="binding site" description="covalent">
    <location>
        <position position="15"/>
    </location>
    <ligand>
        <name>heme c</name>
        <dbReference type="ChEBI" id="CHEBI:61717"/>
    </ligand>
</feature>
<feature type="binding site" description="covalent">
    <location>
        <position position="18"/>
    </location>
    <ligand>
        <name>heme c</name>
        <dbReference type="ChEBI" id="CHEBI:61717"/>
    </ligand>
</feature>
<feature type="binding site" description="axial binding residue" evidence="4 6">
    <location>
        <position position="19"/>
    </location>
    <ligand>
        <name>heme c</name>
        <dbReference type="ChEBI" id="CHEBI:61717"/>
    </ligand>
    <ligandPart>
        <name>Fe</name>
        <dbReference type="ChEBI" id="CHEBI:18248"/>
    </ligandPart>
</feature>
<feature type="binding site" description="axial binding residue">
    <location>
        <position position="81"/>
    </location>
    <ligand>
        <name>heme c</name>
        <dbReference type="ChEBI" id="CHEBI:61717"/>
    </ligand>
    <ligandPart>
        <name>Fe</name>
        <dbReference type="ChEBI" id="CHEBI:18248"/>
    </ligandPart>
</feature>
<feature type="modified residue" description="N-acetylglycine" evidence="5">
    <location>
        <position position="2"/>
    </location>
</feature>
<feature type="modified residue" description="Phosphotyrosine" evidence="2">
    <location>
        <position position="49"/>
    </location>
</feature>
<feature type="modified residue" description="N6-succinyllysine" evidence="3">
    <location>
        <position position="56"/>
    </location>
</feature>
<feature type="modified residue" description="N6-acetyllysine; alternate" evidence="3">
    <location>
        <position position="73"/>
    </location>
</feature>
<feature type="modified residue" description="N6-succinyllysine; alternate" evidence="3">
    <location>
        <position position="73"/>
    </location>
</feature>
<feature type="modified residue" description="Phosphotyrosine" evidence="2">
    <location>
        <position position="98"/>
    </location>
</feature>
<feature type="modified residue" description="N6-acetyllysine" evidence="3">
    <location>
        <position position="100"/>
    </location>
</feature>
<feature type="helix" evidence="14">
    <location>
        <begin position="4"/>
        <end position="14"/>
    </location>
</feature>
<feature type="turn" evidence="14">
    <location>
        <begin position="15"/>
        <end position="18"/>
    </location>
</feature>
<feature type="strand" evidence="13">
    <location>
        <begin position="22"/>
        <end position="24"/>
    </location>
</feature>
<feature type="strand" evidence="11">
    <location>
        <begin position="28"/>
        <end position="30"/>
    </location>
</feature>
<feature type="turn" evidence="10">
    <location>
        <begin position="34"/>
        <end position="37"/>
    </location>
</feature>
<feature type="strand" evidence="13">
    <location>
        <begin position="39"/>
        <end position="42"/>
    </location>
</feature>
<feature type="strand" evidence="9">
    <location>
        <begin position="44"/>
        <end position="47"/>
    </location>
</feature>
<feature type="helix" evidence="14">
    <location>
        <begin position="51"/>
        <end position="55"/>
    </location>
</feature>
<feature type="helix" evidence="14">
    <location>
        <begin position="62"/>
        <end position="70"/>
    </location>
</feature>
<feature type="helix" evidence="14">
    <location>
        <begin position="72"/>
        <end position="75"/>
    </location>
</feature>
<feature type="strand" evidence="12">
    <location>
        <begin position="76"/>
        <end position="78"/>
    </location>
</feature>
<feature type="strand" evidence="8">
    <location>
        <begin position="86"/>
        <end position="88"/>
    </location>
</feature>
<feature type="helix" evidence="14">
    <location>
        <begin position="89"/>
        <end position="102"/>
    </location>
</feature>